<dbReference type="EMBL" id="CU329671">
    <property type="protein sequence ID" value="CAB54815.1"/>
    <property type="molecule type" value="Genomic_DNA"/>
</dbReference>
<dbReference type="PIR" id="T40551">
    <property type="entry name" value="T40551"/>
</dbReference>
<dbReference type="RefSeq" id="NP_595305.1">
    <property type="nucleotide sequence ID" value="NM_001021212.2"/>
</dbReference>
<dbReference type="SMR" id="Q9USR2"/>
<dbReference type="BioGRID" id="277381">
    <property type="interactions" value="3"/>
</dbReference>
<dbReference type="FunCoup" id="Q9USR2">
    <property type="interactions" value="814"/>
</dbReference>
<dbReference type="STRING" id="284812.Q9USR2"/>
<dbReference type="MEROPS" id="C19.972"/>
<dbReference type="PaxDb" id="4896-SPBC577.07.1"/>
<dbReference type="EnsemblFungi" id="SPBC577.07.1">
    <property type="protein sequence ID" value="SPBC577.07.1:pep"/>
    <property type="gene ID" value="SPBC577.07"/>
</dbReference>
<dbReference type="GeneID" id="2540864"/>
<dbReference type="KEGG" id="spo:2540864"/>
<dbReference type="PomBase" id="SPBC577.07">
    <property type="gene designation" value="ubp10"/>
</dbReference>
<dbReference type="VEuPathDB" id="FungiDB:SPBC577.07"/>
<dbReference type="eggNOG" id="KOG2026">
    <property type="taxonomic scope" value="Eukaryota"/>
</dbReference>
<dbReference type="HOGENOM" id="CLU_016848_2_1_1"/>
<dbReference type="InParanoid" id="Q9USR2"/>
<dbReference type="OMA" id="QLRRFKC"/>
<dbReference type="PhylomeDB" id="Q9USR2"/>
<dbReference type="PRO" id="PR:Q9USR2"/>
<dbReference type="Proteomes" id="UP000002485">
    <property type="component" value="Chromosome II"/>
</dbReference>
<dbReference type="GO" id="GO:0005634">
    <property type="term" value="C:nucleus"/>
    <property type="evidence" value="ECO:0007005"/>
    <property type="project" value="PomBase"/>
</dbReference>
<dbReference type="GO" id="GO:0005681">
    <property type="term" value="C:spliceosomal complex"/>
    <property type="evidence" value="ECO:0007669"/>
    <property type="project" value="UniProtKB-KW"/>
</dbReference>
<dbReference type="GO" id="GO:0046540">
    <property type="term" value="C:U4/U6 x U5 tri-snRNP complex"/>
    <property type="evidence" value="ECO:0000250"/>
    <property type="project" value="PomBase"/>
</dbReference>
<dbReference type="GO" id="GO:0004843">
    <property type="term" value="F:cysteine-type deubiquitinase activity"/>
    <property type="evidence" value="ECO:0000255"/>
    <property type="project" value="PomBase"/>
</dbReference>
<dbReference type="GO" id="GO:0008270">
    <property type="term" value="F:zinc ion binding"/>
    <property type="evidence" value="ECO:0007669"/>
    <property type="project" value="UniProtKB-KW"/>
</dbReference>
<dbReference type="GO" id="GO:0016579">
    <property type="term" value="P:protein deubiquitination"/>
    <property type="evidence" value="ECO:0007669"/>
    <property type="project" value="InterPro"/>
</dbReference>
<dbReference type="GO" id="GO:0000245">
    <property type="term" value="P:spliceosomal complex assembly"/>
    <property type="evidence" value="ECO:0000318"/>
    <property type="project" value="GO_Central"/>
</dbReference>
<dbReference type="CDD" id="cd02669">
    <property type="entry name" value="Peptidase_C19M"/>
    <property type="match status" value="1"/>
</dbReference>
<dbReference type="FunFam" id="3.30.40.10:FF:000068">
    <property type="entry name" value="U4/U6.U5 tri-snRNP-associated protein 2"/>
    <property type="match status" value="1"/>
</dbReference>
<dbReference type="Gene3D" id="3.90.70.10">
    <property type="entry name" value="Cysteine proteinases"/>
    <property type="match status" value="1"/>
</dbReference>
<dbReference type="Gene3D" id="3.30.40.10">
    <property type="entry name" value="Zinc/RING finger domain, C3HC4 (zinc finger)"/>
    <property type="match status" value="1"/>
</dbReference>
<dbReference type="InterPro" id="IPR038765">
    <property type="entry name" value="Papain-like_cys_pep_sf"/>
</dbReference>
<dbReference type="InterPro" id="IPR001394">
    <property type="entry name" value="Peptidase_C19_UCH"/>
</dbReference>
<dbReference type="InterPro" id="IPR050185">
    <property type="entry name" value="Ub_carboxyl-term_hydrolase"/>
</dbReference>
<dbReference type="InterPro" id="IPR033809">
    <property type="entry name" value="USP39"/>
</dbReference>
<dbReference type="InterPro" id="IPR028889">
    <property type="entry name" value="USP_dom"/>
</dbReference>
<dbReference type="InterPro" id="IPR013083">
    <property type="entry name" value="Znf_RING/FYVE/PHD"/>
</dbReference>
<dbReference type="InterPro" id="IPR001607">
    <property type="entry name" value="Znf_UBP"/>
</dbReference>
<dbReference type="PANTHER" id="PTHR21646:SF16">
    <property type="entry name" value="U4_U6.U5 TRI-SNRNP-ASSOCIATED PROTEIN 2"/>
    <property type="match status" value="1"/>
</dbReference>
<dbReference type="PANTHER" id="PTHR21646">
    <property type="entry name" value="UBIQUITIN CARBOXYL-TERMINAL HYDROLASE"/>
    <property type="match status" value="1"/>
</dbReference>
<dbReference type="Pfam" id="PF00443">
    <property type="entry name" value="UCH"/>
    <property type="match status" value="1"/>
</dbReference>
<dbReference type="Pfam" id="PF02148">
    <property type="entry name" value="zf-UBP"/>
    <property type="match status" value="1"/>
</dbReference>
<dbReference type="SMART" id="SM00290">
    <property type="entry name" value="ZnF_UBP"/>
    <property type="match status" value="1"/>
</dbReference>
<dbReference type="SUPFAM" id="SSF54001">
    <property type="entry name" value="Cysteine proteinases"/>
    <property type="match status" value="1"/>
</dbReference>
<dbReference type="SUPFAM" id="SSF57850">
    <property type="entry name" value="RING/U-box"/>
    <property type="match status" value="1"/>
</dbReference>
<dbReference type="PROSITE" id="PS50235">
    <property type="entry name" value="USP_3"/>
    <property type="match status" value="1"/>
</dbReference>
<dbReference type="PROSITE" id="PS50271">
    <property type="entry name" value="ZF_UBP"/>
    <property type="match status" value="1"/>
</dbReference>
<gene>
    <name type="primary">ubp10</name>
    <name type="ORF">SPBC577.07</name>
</gene>
<sequence length="502" mass="58885">MSENKDKNNILKRHIEEDNNIDNGKRKKLELGKDMEDVHDIASKEMEEHETTPIISQNLYLDTINRKLLDFDFEKVCSVSLTNLSVYACLVCGRYFQGRGPSSHAYFHALTENHHVFVNCSTLKFYVLPESYQVESSALQDIAYVMRPTFTKLEVQRLDHTPQLSYDLMLKPYVPGFVGMNNIKNNDYFNVVIHMLAHVKPFRNYFLLKNFDNCPQLVQRLAILIRKLWNHKAFKSHVSPQELIQEVTVLSHKKYSINEQKDPVEFLSWFLNTLHNCLGGKKSTIAKPTSIVHYSFQGFVRIESQKIRQHAEKGEQVVFTGDRVIQTNVVPFLYLTLDLPPKPIFQDEFEGNIIPQVELKEILNKYNGVHTQELAGMRRRFHLMTAPPYFIFHIKRFMKNNYFTERNQTIVTFPLDDFDMSPFIDDSFIQSNPKISTKYNLVANIIHESVTHAEEEFHNFRIQIRNPSTNKWYQIQDLYVEEISSDMIRLGESFIQLWERSS</sequence>
<name>UBP10_SCHPO</name>
<proteinExistence type="inferred from homology"/>
<feature type="chain" id="PRO_0000351443" description="Probable mRNA-splicing protein ubp10">
    <location>
        <begin position="1"/>
        <end position="502"/>
    </location>
</feature>
<feature type="domain" description="USP">
    <location>
        <begin position="178"/>
        <end position="501"/>
    </location>
</feature>
<feature type="zinc finger region" description="UBP-type; degenerate" evidence="2">
    <location>
        <begin position="56"/>
        <end position="153"/>
    </location>
</feature>
<feature type="binding site" evidence="2">
    <location>
        <position position="89"/>
    </location>
    <ligand>
        <name>Zn(2+)</name>
        <dbReference type="ChEBI" id="CHEBI:29105"/>
    </ligand>
</feature>
<feature type="binding site" evidence="2">
    <location>
        <position position="92"/>
    </location>
    <ligand>
        <name>Zn(2+)</name>
        <dbReference type="ChEBI" id="CHEBI:29105"/>
    </ligand>
</feature>
<feature type="binding site" evidence="2">
    <location>
        <position position="108"/>
    </location>
    <ligand>
        <name>Zn(2+)</name>
        <dbReference type="ChEBI" id="CHEBI:29105"/>
    </ligand>
</feature>
<feature type="binding site" evidence="2">
    <location>
        <position position="114"/>
    </location>
    <ligand>
        <name>Zn(2+)</name>
        <dbReference type="ChEBI" id="CHEBI:29105"/>
    </ligand>
</feature>
<evidence type="ECO:0000250" key="1"/>
<evidence type="ECO:0000255" key="2">
    <source>
        <dbReference type="PROSITE-ProRule" id="PRU00502"/>
    </source>
</evidence>
<evidence type="ECO:0000269" key="3">
    <source>
    </source>
</evidence>
<evidence type="ECO:0000305" key="4"/>
<protein>
    <recommendedName>
        <fullName>Probable mRNA-splicing protein ubp10</fullName>
    </recommendedName>
    <alternativeName>
        <fullName>Probable inactive ubiquitin-specific-processing protease 10</fullName>
    </alternativeName>
</protein>
<keyword id="KW-0479">Metal-binding</keyword>
<keyword id="KW-0507">mRNA processing</keyword>
<keyword id="KW-0508">mRNA splicing</keyword>
<keyword id="KW-0539">Nucleus</keyword>
<keyword id="KW-1185">Reference proteome</keyword>
<keyword id="KW-0687">Ribonucleoprotein</keyword>
<keyword id="KW-0747">Spliceosome</keyword>
<keyword id="KW-0862">Zinc</keyword>
<keyword id="KW-0863">Zinc-finger</keyword>
<comment type="function">
    <text evidence="1">May play a role in mRNA splicing. It is unsure if the protein really exhibits hydrolase activity. Could be a competitor of ubiquitin C-terminal hydrolases (UCHs) (By similarity).</text>
</comment>
<comment type="subcellular location">
    <subcellularLocation>
        <location evidence="3">Nucleus</location>
    </subcellularLocation>
</comment>
<comment type="similarity">
    <text evidence="4">Belongs to the peptidase C19 family.</text>
</comment>
<organism>
    <name type="scientific">Schizosaccharomyces pombe (strain 972 / ATCC 24843)</name>
    <name type="common">Fission yeast</name>
    <dbReference type="NCBI Taxonomy" id="284812"/>
    <lineage>
        <taxon>Eukaryota</taxon>
        <taxon>Fungi</taxon>
        <taxon>Dikarya</taxon>
        <taxon>Ascomycota</taxon>
        <taxon>Taphrinomycotina</taxon>
        <taxon>Schizosaccharomycetes</taxon>
        <taxon>Schizosaccharomycetales</taxon>
        <taxon>Schizosaccharomycetaceae</taxon>
        <taxon>Schizosaccharomyces</taxon>
    </lineage>
</organism>
<accession>Q9USR2</accession>
<reference key="1">
    <citation type="journal article" date="2002" name="Nature">
        <title>The genome sequence of Schizosaccharomyces pombe.</title>
        <authorList>
            <person name="Wood V."/>
            <person name="Gwilliam R."/>
            <person name="Rajandream M.A."/>
            <person name="Lyne M.H."/>
            <person name="Lyne R."/>
            <person name="Stewart A."/>
            <person name="Sgouros J.G."/>
            <person name="Peat N."/>
            <person name="Hayles J."/>
            <person name="Baker S.G."/>
            <person name="Basham D."/>
            <person name="Bowman S."/>
            <person name="Brooks K."/>
            <person name="Brown D."/>
            <person name="Brown S."/>
            <person name="Chillingworth T."/>
            <person name="Churcher C.M."/>
            <person name="Collins M."/>
            <person name="Connor R."/>
            <person name="Cronin A."/>
            <person name="Davis P."/>
            <person name="Feltwell T."/>
            <person name="Fraser A."/>
            <person name="Gentles S."/>
            <person name="Goble A."/>
            <person name="Hamlin N."/>
            <person name="Harris D.E."/>
            <person name="Hidalgo J."/>
            <person name="Hodgson G."/>
            <person name="Holroyd S."/>
            <person name="Hornsby T."/>
            <person name="Howarth S."/>
            <person name="Huckle E.J."/>
            <person name="Hunt S."/>
            <person name="Jagels K."/>
            <person name="James K.D."/>
            <person name="Jones L."/>
            <person name="Jones M."/>
            <person name="Leather S."/>
            <person name="McDonald S."/>
            <person name="McLean J."/>
            <person name="Mooney P."/>
            <person name="Moule S."/>
            <person name="Mungall K.L."/>
            <person name="Murphy L.D."/>
            <person name="Niblett D."/>
            <person name="Odell C."/>
            <person name="Oliver K."/>
            <person name="O'Neil S."/>
            <person name="Pearson D."/>
            <person name="Quail M.A."/>
            <person name="Rabbinowitsch E."/>
            <person name="Rutherford K.M."/>
            <person name="Rutter S."/>
            <person name="Saunders D."/>
            <person name="Seeger K."/>
            <person name="Sharp S."/>
            <person name="Skelton J."/>
            <person name="Simmonds M.N."/>
            <person name="Squares R."/>
            <person name="Squares S."/>
            <person name="Stevens K."/>
            <person name="Taylor K."/>
            <person name="Taylor R.G."/>
            <person name="Tivey A."/>
            <person name="Walsh S.V."/>
            <person name="Warren T."/>
            <person name="Whitehead S."/>
            <person name="Woodward J.R."/>
            <person name="Volckaert G."/>
            <person name="Aert R."/>
            <person name="Robben J."/>
            <person name="Grymonprez B."/>
            <person name="Weltjens I."/>
            <person name="Vanstreels E."/>
            <person name="Rieger M."/>
            <person name="Schaefer M."/>
            <person name="Mueller-Auer S."/>
            <person name="Gabel C."/>
            <person name="Fuchs M."/>
            <person name="Duesterhoeft A."/>
            <person name="Fritzc C."/>
            <person name="Holzer E."/>
            <person name="Moestl D."/>
            <person name="Hilbert H."/>
            <person name="Borzym K."/>
            <person name="Langer I."/>
            <person name="Beck A."/>
            <person name="Lehrach H."/>
            <person name="Reinhardt R."/>
            <person name="Pohl T.M."/>
            <person name="Eger P."/>
            <person name="Zimmermann W."/>
            <person name="Wedler H."/>
            <person name="Wambutt R."/>
            <person name="Purnelle B."/>
            <person name="Goffeau A."/>
            <person name="Cadieu E."/>
            <person name="Dreano S."/>
            <person name="Gloux S."/>
            <person name="Lelaure V."/>
            <person name="Mottier S."/>
            <person name="Galibert F."/>
            <person name="Aves S.J."/>
            <person name="Xiang Z."/>
            <person name="Hunt C."/>
            <person name="Moore K."/>
            <person name="Hurst S.M."/>
            <person name="Lucas M."/>
            <person name="Rochet M."/>
            <person name="Gaillardin C."/>
            <person name="Tallada V.A."/>
            <person name="Garzon A."/>
            <person name="Thode G."/>
            <person name="Daga R.R."/>
            <person name="Cruzado L."/>
            <person name="Jimenez J."/>
            <person name="Sanchez M."/>
            <person name="del Rey F."/>
            <person name="Benito J."/>
            <person name="Dominguez A."/>
            <person name="Revuelta J.L."/>
            <person name="Moreno S."/>
            <person name="Armstrong J."/>
            <person name="Forsburg S.L."/>
            <person name="Cerutti L."/>
            <person name="Lowe T."/>
            <person name="McCombie W.R."/>
            <person name="Paulsen I."/>
            <person name="Potashkin J."/>
            <person name="Shpakovski G.V."/>
            <person name="Ussery D."/>
            <person name="Barrell B.G."/>
            <person name="Nurse P."/>
        </authorList>
    </citation>
    <scope>NUCLEOTIDE SEQUENCE [LARGE SCALE GENOMIC DNA]</scope>
    <source>
        <strain>972 / ATCC 24843</strain>
    </source>
</reference>
<reference key="2">
    <citation type="journal article" date="2006" name="Nat. Biotechnol.">
        <title>ORFeome cloning and global analysis of protein localization in the fission yeast Schizosaccharomyces pombe.</title>
        <authorList>
            <person name="Matsuyama A."/>
            <person name="Arai R."/>
            <person name="Yashiroda Y."/>
            <person name="Shirai A."/>
            <person name="Kamata A."/>
            <person name="Sekido S."/>
            <person name="Kobayashi Y."/>
            <person name="Hashimoto A."/>
            <person name="Hamamoto M."/>
            <person name="Hiraoka Y."/>
            <person name="Horinouchi S."/>
            <person name="Yoshida M."/>
        </authorList>
    </citation>
    <scope>SUBCELLULAR LOCATION [LARGE SCALE ANALYSIS]</scope>
</reference>